<reference key="1">
    <citation type="journal article" date="2011" name="MBio">
        <title>Novel metabolic attributes of the genus Cyanothece, comprising a group of unicellular nitrogen-fixing Cyanobacteria.</title>
        <authorList>
            <person name="Bandyopadhyay A."/>
            <person name="Elvitigala T."/>
            <person name="Welsh E."/>
            <person name="Stockel J."/>
            <person name="Liberton M."/>
            <person name="Min H."/>
            <person name="Sherman L.A."/>
            <person name="Pakrasi H.B."/>
        </authorList>
    </citation>
    <scope>NUCLEOTIDE SEQUENCE [LARGE SCALE GENOMIC DNA]</scope>
    <source>
        <strain>PCC 7424</strain>
    </source>
</reference>
<keyword id="KW-1185">Reference proteome</keyword>
<proteinExistence type="inferred from homology"/>
<dbReference type="EMBL" id="CP001291">
    <property type="protein sequence ID" value="ACK69132.1"/>
    <property type="molecule type" value="Genomic_DNA"/>
</dbReference>
<dbReference type="RefSeq" id="WP_012598079.1">
    <property type="nucleotide sequence ID" value="NC_011729.1"/>
</dbReference>
<dbReference type="SMR" id="B7KEV7"/>
<dbReference type="STRING" id="65393.PCC7424_0673"/>
<dbReference type="KEGG" id="cyc:PCC7424_0673"/>
<dbReference type="eggNOG" id="COG1872">
    <property type="taxonomic scope" value="Bacteria"/>
</dbReference>
<dbReference type="HOGENOM" id="CLU_130694_5_3_3"/>
<dbReference type="OrthoDB" id="9800587at2"/>
<dbReference type="Proteomes" id="UP000002384">
    <property type="component" value="Chromosome"/>
</dbReference>
<dbReference type="GO" id="GO:0005737">
    <property type="term" value="C:cytoplasm"/>
    <property type="evidence" value="ECO:0007669"/>
    <property type="project" value="TreeGrafter"/>
</dbReference>
<dbReference type="Gene3D" id="3.30.1200.10">
    <property type="entry name" value="YggU-like"/>
    <property type="match status" value="1"/>
</dbReference>
<dbReference type="HAMAP" id="MF_00634">
    <property type="entry name" value="UPF0235"/>
    <property type="match status" value="1"/>
</dbReference>
<dbReference type="InterPro" id="IPR003746">
    <property type="entry name" value="DUF167"/>
</dbReference>
<dbReference type="InterPro" id="IPR036591">
    <property type="entry name" value="YggU-like_sf"/>
</dbReference>
<dbReference type="NCBIfam" id="TIGR00251">
    <property type="entry name" value="DUF167 family protein"/>
    <property type="match status" value="1"/>
</dbReference>
<dbReference type="PANTHER" id="PTHR13420">
    <property type="entry name" value="UPF0235 PROTEIN C15ORF40"/>
    <property type="match status" value="1"/>
</dbReference>
<dbReference type="PANTHER" id="PTHR13420:SF7">
    <property type="entry name" value="UPF0235 PROTEIN C15ORF40"/>
    <property type="match status" value="1"/>
</dbReference>
<dbReference type="Pfam" id="PF02594">
    <property type="entry name" value="DUF167"/>
    <property type="match status" value="1"/>
</dbReference>
<dbReference type="SMART" id="SM01152">
    <property type="entry name" value="DUF167"/>
    <property type="match status" value="1"/>
</dbReference>
<dbReference type="SUPFAM" id="SSF69786">
    <property type="entry name" value="YggU-like"/>
    <property type="match status" value="1"/>
</dbReference>
<evidence type="ECO:0000255" key="1">
    <source>
        <dbReference type="HAMAP-Rule" id="MF_00634"/>
    </source>
</evidence>
<name>Y673_GLOC7</name>
<sequence length="73" mass="8153">MKIQVKVKPNAKHQKIEEAEDGSLIISLKSPPVEGKANQELIKLLAQKYRVTKSQISIQSGLSSRNKLIEILD</sequence>
<feature type="chain" id="PRO_1000130676" description="UPF0235 protein PCC7424_0673">
    <location>
        <begin position="1"/>
        <end position="73"/>
    </location>
</feature>
<organism>
    <name type="scientific">Gloeothece citriformis (strain PCC 7424)</name>
    <name type="common">Cyanothece sp. (strain PCC 7424)</name>
    <dbReference type="NCBI Taxonomy" id="65393"/>
    <lineage>
        <taxon>Bacteria</taxon>
        <taxon>Bacillati</taxon>
        <taxon>Cyanobacteriota</taxon>
        <taxon>Cyanophyceae</taxon>
        <taxon>Oscillatoriophycideae</taxon>
        <taxon>Chroococcales</taxon>
        <taxon>Aphanothecaceae</taxon>
        <taxon>Gloeothece</taxon>
        <taxon>Gloeothece citriformis</taxon>
    </lineage>
</organism>
<comment type="similarity">
    <text evidence="1">Belongs to the UPF0235 family.</text>
</comment>
<accession>B7KEV7</accession>
<gene>
    <name type="ordered locus">PCC7424_0673</name>
</gene>
<protein>
    <recommendedName>
        <fullName evidence="1">UPF0235 protein PCC7424_0673</fullName>
    </recommendedName>
</protein>